<accession>A1USC1</accession>
<evidence type="ECO:0000250" key="1"/>
<evidence type="ECO:0000255" key="2">
    <source>
        <dbReference type="HAMAP-Rule" id="MF_00118"/>
    </source>
</evidence>
<gene>
    <name evidence="2" type="primary">tuf1</name>
    <name type="ordered locus">BARBAKC583_0563</name>
</gene>
<organism>
    <name type="scientific">Bartonella bacilliformis (strain ATCC 35685 / KC583 / Herrer 020/F12,63)</name>
    <dbReference type="NCBI Taxonomy" id="360095"/>
    <lineage>
        <taxon>Bacteria</taxon>
        <taxon>Pseudomonadati</taxon>
        <taxon>Pseudomonadota</taxon>
        <taxon>Alphaproteobacteria</taxon>
        <taxon>Hyphomicrobiales</taxon>
        <taxon>Bartonellaceae</taxon>
        <taxon>Bartonella</taxon>
    </lineage>
</organism>
<sequence length="391" mass="42803">MAKSKFERTKLHVNIGTIGHVDHGKTSLTAAITKYFGEFKAYDQIDAAPEERARGITISTAHVEYETDQRHYAHVDCPGHADYVKNMITGAAQMDGAILVVSAADGPMPQTREHILLARQVGVPAIVVFLNKVDQVDDAELLELVELEVRELLSKYDFPGDDIPIVKGSALAALEDSDKSIGEDAVRLLMSEVDRYIPTPERPVDQSFLMPIEDVFSISGRGTVVTGRVERGVVKVGEEIEIVGIRPTSKTTVTGVEMFRKLLDQGQAGDNIGALLRGIDREGIERGQVLAKPGSVTPHTKFKAEAYILTKDEGGRHTPFFTNYRPQFYFRTTDVTGIVTLPEGTEMVMPGDNVAMDVSLIVPIAMEEKLRFAIREGGRTVGAGIVSKIIE</sequence>
<name>EFTU1_BARBK</name>
<dbReference type="EC" id="3.6.5.3" evidence="2"/>
<dbReference type="EMBL" id="CP000524">
    <property type="protein sequence ID" value="ABM45353.1"/>
    <property type="molecule type" value="Genomic_DNA"/>
</dbReference>
<dbReference type="SMR" id="A1USC1"/>
<dbReference type="STRING" id="360095.BARBAKC583_0563"/>
<dbReference type="GeneID" id="4684165"/>
<dbReference type="KEGG" id="bbk:BARBAKC583_0563"/>
<dbReference type="PATRIC" id="fig|360095.6.peg.545"/>
<dbReference type="eggNOG" id="COG0050">
    <property type="taxonomic scope" value="Bacteria"/>
</dbReference>
<dbReference type="HOGENOM" id="CLU_007265_0_1_5"/>
<dbReference type="OrthoDB" id="9803139at2"/>
<dbReference type="Proteomes" id="UP000000643">
    <property type="component" value="Chromosome"/>
</dbReference>
<dbReference type="GO" id="GO:0005829">
    <property type="term" value="C:cytosol"/>
    <property type="evidence" value="ECO:0007669"/>
    <property type="project" value="TreeGrafter"/>
</dbReference>
<dbReference type="GO" id="GO:0005525">
    <property type="term" value="F:GTP binding"/>
    <property type="evidence" value="ECO:0007669"/>
    <property type="project" value="UniProtKB-UniRule"/>
</dbReference>
<dbReference type="GO" id="GO:0003924">
    <property type="term" value="F:GTPase activity"/>
    <property type="evidence" value="ECO:0007669"/>
    <property type="project" value="InterPro"/>
</dbReference>
<dbReference type="GO" id="GO:0097216">
    <property type="term" value="F:guanosine tetraphosphate binding"/>
    <property type="evidence" value="ECO:0007669"/>
    <property type="project" value="UniProtKB-ARBA"/>
</dbReference>
<dbReference type="GO" id="GO:0003746">
    <property type="term" value="F:translation elongation factor activity"/>
    <property type="evidence" value="ECO:0007669"/>
    <property type="project" value="UniProtKB-UniRule"/>
</dbReference>
<dbReference type="CDD" id="cd01884">
    <property type="entry name" value="EF_Tu"/>
    <property type="match status" value="1"/>
</dbReference>
<dbReference type="CDD" id="cd03697">
    <property type="entry name" value="EFTU_II"/>
    <property type="match status" value="1"/>
</dbReference>
<dbReference type="CDD" id="cd03707">
    <property type="entry name" value="EFTU_III"/>
    <property type="match status" value="1"/>
</dbReference>
<dbReference type="FunFam" id="2.40.30.10:FF:000001">
    <property type="entry name" value="Elongation factor Tu"/>
    <property type="match status" value="1"/>
</dbReference>
<dbReference type="FunFam" id="3.40.50.300:FF:000003">
    <property type="entry name" value="Elongation factor Tu"/>
    <property type="match status" value="1"/>
</dbReference>
<dbReference type="Gene3D" id="3.40.50.300">
    <property type="entry name" value="P-loop containing nucleotide triphosphate hydrolases"/>
    <property type="match status" value="1"/>
</dbReference>
<dbReference type="Gene3D" id="2.40.30.10">
    <property type="entry name" value="Translation factors"/>
    <property type="match status" value="2"/>
</dbReference>
<dbReference type="HAMAP" id="MF_00118_B">
    <property type="entry name" value="EF_Tu_B"/>
    <property type="match status" value="1"/>
</dbReference>
<dbReference type="InterPro" id="IPR041709">
    <property type="entry name" value="EF-Tu_GTP-bd"/>
</dbReference>
<dbReference type="InterPro" id="IPR050055">
    <property type="entry name" value="EF-Tu_GTPase"/>
</dbReference>
<dbReference type="InterPro" id="IPR004161">
    <property type="entry name" value="EFTu-like_2"/>
</dbReference>
<dbReference type="InterPro" id="IPR033720">
    <property type="entry name" value="EFTU_2"/>
</dbReference>
<dbReference type="InterPro" id="IPR031157">
    <property type="entry name" value="G_TR_CS"/>
</dbReference>
<dbReference type="InterPro" id="IPR027417">
    <property type="entry name" value="P-loop_NTPase"/>
</dbReference>
<dbReference type="InterPro" id="IPR005225">
    <property type="entry name" value="Small_GTP-bd"/>
</dbReference>
<dbReference type="InterPro" id="IPR000795">
    <property type="entry name" value="T_Tr_GTP-bd_dom"/>
</dbReference>
<dbReference type="InterPro" id="IPR009000">
    <property type="entry name" value="Transl_B-barrel_sf"/>
</dbReference>
<dbReference type="InterPro" id="IPR009001">
    <property type="entry name" value="Transl_elong_EF1A/Init_IF2_C"/>
</dbReference>
<dbReference type="InterPro" id="IPR004541">
    <property type="entry name" value="Transl_elong_EFTu/EF1A_bac/org"/>
</dbReference>
<dbReference type="InterPro" id="IPR004160">
    <property type="entry name" value="Transl_elong_EFTu/EF1A_C"/>
</dbReference>
<dbReference type="NCBIfam" id="TIGR00485">
    <property type="entry name" value="EF-Tu"/>
    <property type="match status" value="1"/>
</dbReference>
<dbReference type="NCBIfam" id="NF000766">
    <property type="entry name" value="PRK00049.1"/>
    <property type="match status" value="1"/>
</dbReference>
<dbReference type="NCBIfam" id="NF009372">
    <property type="entry name" value="PRK12735.1"/>
    <property type="match status" value="1"/>
</dbReference>
<dbReference type="NCBIfam" id="NF009373">
    <property type="entry name" value="PRK12736.1"/>
    <property type="match status" value="1"/>
</dbReference>
<dbReference type="NCBIfam" id="TIGR00231">
    <property type="entry name" value="small_GTP"/>
    <property type="match status" value="1"/>
</dbReference>
<dbReference type="PANTHER" id="PTHR43721:SF22">
    <property type="entry name" value="ELONGATION FACTOR TU, MITOCHONDRIAL"/>
    <property type="match status" value="1"/>
</dbReference>
<dbReference type="PANTHER" id="PTHR43721">
    <property type="entry name" value="ELONGATION FACTOR TU-RELATED"/>
    <property type="match status" value="1"/>
</dbReference>
<dbReference type="Pfam" id="PF00009">
    <property type="entry name" value="GTP_EFTU"/>
    <property type="match status" value="1"/>
</dbReference>
<dbReference type="Pfam" id="PF03144">
    <property type="entry name" value="GTP_EFTU_D2"/>
    <property type="match status" value="1"/>
</dbReference>
<dbReference type="Pfam" id="PF03143">
    <property type="entry name" value="GTP_EFTU_D3"/>
    <property type="match status" value="1"/>
</dbReference>
<dbReference type="PRINTS" id="PR00315">
    <property type="entry name" value="ELONGATNFCT"/>
</dbReference>
<dbReference type="SUPFAM" id="SSF50465">
    <property type="entry name" value="EF-Tu/eEF-1alpha/eIF2-gamma C-terminal domain"/>
    <property type="match status" value="1"/>
</dbReference>
<dbReference type="SUPFAM" id="SSF52540">
    <property type="entry name" value="P-loop containing nucleoside triphosphate hydrolases"/>
    <property type="match status" value="1"/>
</dbReference>
<dbReference type="SUPFAM" id="SSF50447">
    <property type="entry name" value="Translation proteins"/>
    <property type="match status" value="1"/>
</dbReference>
<dbReference type="PROSITE" id="PS00301">
    <property type="entry name" value="G_TR_1"/>
    <property type="match status" value="1"/>
</dbReference>
<dbReference type="PROSITE" id="PS51722">
    <property type="entry name" value="G_TR_2"/>
    <property type="match status" value="1"/>
</dbReference>
<keyword id="KW-0963">Cytoplasm</keyword>
<keyword id="KW-0251">Elongation factor</keyword>
<keyword id="KW-0342">GTP-binding</keyword>
<keyword id="KW-0378">Hydrolase</keyword>
<keyword id="KW-0460">Magnesium</keyword>
<keyword id="KW-0479">Metal-binding</keyword>
<keyword id="KW-0547">Nucleotide-binding</keyword>
<keyword id="KW-0648">Protein biosynthesis</keyword>
<feature type="chain" id="PRO_0000337320" description="Elongation factor Tu 1">
    <location>
        <begin position="1"/>
        <end position="391"/>
    </location>
</feature>
<feature type="domain" description="tr-type G">
    <location>
        <begin position="10"/>
        <end position="201"/>
    </location>
</feature>
<feature type="region of interest" description="G1" evidence="1">
    <location>
        <begin position="19"/>
        <end position="26"/>
    </location>
</feature>
<feature type="region of interest" description="G2" evidence="1">
    <location>
        <begin position="55"/>
        <end position="59"/>
    </location>
</feature>
<feature type="region of interest" description="G3" evidence="1">
    <location>
        <begin position="76"/>
        <end position="79"/>
    </location>
</feature>
<feature type="region of interest" description="G4" evidence="1">
    <location>
        <begin position="131"/>
        <end position="134"/>
    </location>
</feature>
<feature type="region of interest" description="G5" evidence="1">
    <location>
        <begin position="169"/>
        <end position="171"/>
    </location>
</feature>
<feature type="binding site" evidence="2">
    <location>
        <begin position="19"/>
        <end position="26"/>
    </location>
    <ligand>
        <name>GTP</name>
        <dbReference type="ChEBI" id="CHEBI:37565"/>
    </ligand>
</feature>
<feature type="binding site" evidence="2">
    <location>
        <position position="26"/>
    </location>
    <ligand>
        <name>Mg(2+)</name>
        <dbReference type="ChEBI" id="CHEBI:18420"/>
    </ligand>
</feature>
<feature type="binding site" evidence="2">
    <location>
        <begin position="76"/>
        <end position="80"/>
    </location>
    <ligand>
        <name>GTP</name>
        <dbReference type="ChEBI" id="CHEBI:37565"/>
    </ligand>
</feature>
<feature type="binding site" evidence="2">
    <location>
        <begin position="131"/>
        <end position="134"/>
    </location>
    <ligand>
        <name>GTP</name>
        <dbReference type="ChEBI" id="CHEBI:37565"/>
    </ligand>
</feature>
<protein>
    <recommendedName>
        <fullName evidence="2">Elongation factor Tu 1</fullName>
        <shortName evidence="2">EF-Tu 1</shortName>
        <ecNumber evidence="2">3.6.5.3</ecNumber>
    </recommendedName>
</protein>
<comment type="function">
    <text evidence="2">GTP hydrolase that promotes the GTP-dependent binding of aminoacyl-tRNA to the A-site of ribosomes during protein biosynthesis.</text>
</comment>
<comment type="catalytic activity">
    <reaction evidence="2">
        <text>GTP + H2O = GDP + phosphate + H(+)</text>
        <dbReference type="Rhea" id="RHEA:19669"/>
        <dbReference type="ChEBI" id="CHEBI:15377"/>
        <dbReference type="ChEBI" id="CHEBI:15378"/>
        <dbReference type="ChEBI" id="CHEBI:37565"/>
        <dbReference type="ChEBI" id="CHEBI:43474"/>
        <dbReference type="ChEBI" id="CHEBI:58189"/>
        <dbReference type="EC" id="3.6.5.3"/>
    </reaction>
    <physiologicalReaction direction="left-to-right" evidence="2">
        <dbReference type="Rhea" id="RHEA:19670"/>
    </physiologicalReaction>
</comment>
<comment type="subunit">
    <text evidence="2">Monomer.</text>
</comment>
<comment type="subcellular location">
    <subcellularLocation>
        <location evidence="2">Cytoplasm</location>
    </subcellularLocation>
</comment>
<comment type="similarity">
    <text evidence="2">Belongs to the TRAFAC class translation factor GTPase superfamily. Classic translation factor GTPase family. EF-Tu/EF-1A subfamily.</text>
</comment>
<reference key="1">
    <citation type="submission" date="2006-12" db="EMBL/GenBank/DDBJ databases">
        <authorList>
            <person name="Hendrix L."/>
            <person name="Mohamoud Y."/>
            <person name="Radune D."/>
            <person name="Shvartsbeyn A."/>
            <person name="Daugherty S."/>
            <person name="Dodson R."/>
            <person name="Durkin A.S."/>
            <person name="Harkins D."/>
            <person name="Huot H."/>
            <person name="Kothari S.P."/>
            <person name="Madupu R."/>
            <person name="Li J."/>
            <person name="Nelson W.C."/>
            <person name="Shrivastava S."/>
            <person name="Giglio M.G."/>
            <person name="Haft D."/>
            <person name="Selengut J."/>
            <person name="Fraser-Ligget C."/>
            <person name="Seshadri R."/>
        </authorList>
    </citation>
    <scope>NUCLEOTIDE SEQUENCE [LARGE SCALE GENOMIC DNA]</scope>
    <source>
        <strain>ATCC 35685 / KC583 / Herrer 020/F12,63</strain>
    </source>
</reference>
<proteinExistence type="inferred from homology"/>